<accession>P07870</accession>
<accession>O32196</accession>
<gene>
    <name type="primary">gerAC</name>
    <name type="synonym">gerA3</name>
    <name type="ordered locus">BSU33070</name>
</gene>
<sequence length="373" mass="42392">MKIRILCMFICTLLLSGCWDSENIEELSLVIGIGLDKPDDENLELTQQILVPKIISAKEGSSSDPTQLSITKGKTVHQMMRTSALKHKPTFSQHLRLILLSKSVIADQIGMDAIINQFVRDNGTRRSSYVFITNGRTKDIFNMNDEGEPASNVIYDLTENNKVTIRTMEPVTLGEISEHLTSDDSFLIPHVGKENGKLAINGASIIKNKLWHRDLTPIEVQNISLFSGTVEGGVIDLKRDGHLFSYEVYSSNRKIKTAYKDGKFKFTVTRNIEGRLSEDWNPNEDSFKDSYIKSIEKTVEKRVHETVTSFITEKLQKEIKADVTGLGNEVRIHYPQKWKKISRKWDDDYFSNAEIDYRVNVIVRDFGTKGANK</sequence>
<dbReference type="EMBL" id="M16189">
    <property type="protein sequence ID" value="AAA92782.1"/>
    <property type="molecule type" value="Genomic_DNA"/>
</dbReference>
<dbReference type="EMBL" id="AJ223978">
    <property type="protein sequence ID" value="CAA11746.1"/>
    <property type="molecule type" value="Genomic_DNA"/>
</dbReference>
<dbReference type="EMBL" id="AL009126">
    <property type="protein sequence ID" value="CAB15297.1"/>
    <property type="molecule type" value="Genomic_DNA"/>
</dbReference>
<dbReference type="PIR" id="B26470">
    <property type="entry name" value="B26470"/>
</dbReference>
<dbReference type="PIR" id="G69629">
    <property type="entry name" value="G69629"/>
</dbReference>
<dbReference type="RefSeq" id="NP_391187.1">
    <property type="nucleotide sequence ID" value="NC_000964.3"/>
</dbReference>
<dbReference type="RefSeq" id="WP_009968146.1">
    <property type="nucleotide sequence ID" value="NZ_OZ025638.1"/>
</dbReference>
<dbReference type="SMR" id="P07870"/>
<dbReference type="FunCoup" id="P07870">
    <property type="interactions" value="104"/>
</dbReference>
<dbReference type="STRING" id="224308.BSU33070"/>
<dbReference type="PaxDb" id="224308-BSU33070"/>
<dbReference type="EnsemblBacteria" id="CAB15297">
    <property type="protein sequence ID" value="CAB15297"/>
    <property type="gene ID" value="BSU_33070"/>
</dbReference>
<dbReference type="GeneID" id="935951"/>
<dbReference type="KEGG" id="bsu:BSU33070"/>
<dbReference type="PATRIC" id="fig|224308.179.peg.3585"/>
<dbReference type="eggNOG" id="ENOG502ZT3R">
    <property type="taxonomic scope" value="Bacteria"/>
</dbReference>
<dbReference type="InParanoid" id="P07870"/>
<dbReference type="OrthoDB" id="2569624at2"/>
<dbReference type="PhylomeDB" id="P07870"/>
<dbReference type="BioCyc" id="BSUB:BSU33070-MONOMER"/>
<dbReference type="Proteomes" id="UP000001570">
    <property type="component" value="Chromosome"/>
</dbReference>
<dbReference type="GO" id="GO:0005886">
    <property type="term" value="C:plasma membrane"/>
    <property type="evidence" value="ECO:0007669"/>
    <property type="project" value="UniProtKB-SubCell"/>
</dbReference>
<dbReference type="GO" id="GO:0009847">
    <property type="term" value="P:spore germination"/>
    <property type="evidence" value="ECO:0007669"/>
    <property type="project" value="InterPro"/>
</dbReference>
<dbReference type="Gene3D" id="6.20.190.10">
    <property type="entry name" value="Nutrient germinant receptor protein C, domain 1"/>
    <property type="match status" value="1"/>
</dbReference>
<dbReference type="Gene3D" id="3.30.300.210">
    <property type="entry name" value="Nutrient germinant receptor protein C, domain 3"/>
    <property type="match status" value="1"/>
</dbReference>
<dbReference type="InterPro" id="IPR008844">
    <property type="entry name" value="Spore_GerAC-like"/>
</dbReference>
<dbReference type="InterPro" id="IPR046953">
    <property type="entry name" value="Spore_GerAC-like_C"/>
</dbReference>
<dbReference type="InterPro" id="IPR038501">
    <property type="entry name" value="Spore_GerAC_C_sf"/>
</dbReference>
<dbReference type="NCBIfam" id="TIGR02887">
    <property type="entry name" value="spore_ger_x_C"/>
    <property type="match status" value="1"/>
</dbReference>
<dbReference type="PANTHER" id="PTHR35789">
    <property type="entry name" value="SPORE GERMINATION PROTEIN B3"/>
    <property type="match status" value="1"/>
</dbReference>
<dbReference type="PANTHER" id="PTHR35789:SF1">
    <property type="entry name" value="SPORE GERMINATION PROTEIN B3"/>
    <property type="match status" value="1"/>
</dbReference>
<dbReference type="Pfam" id="PF05504">
    <property type="entry name" value="Spore_GerAC"/>
    <property type="match status" value="1"/>
</dbReference>
<dbReference type="Pfam" id="PF25198">
    <property type="entry name" value="Spore_GerAC_N"/>
    <property type="match status" value="1"/>
</dbReference>
<dbReference type="PROSITE" id="PS51257">
    <property type="entry name" value="PROKAR_LIPOPROTEIN"/>
    <property type="match status" value="1"/>
</dbReference>
<organism>
    <name type="scientific">Bacillus subtilis (strain 168)</name>
    <dbReference type="NCBI Taxonomy" id="224308"/>
    <lineage>
        <taxon>Bacteria</taxon>
        <taxon>Bacillati</taxon>
        <taxon>Bacillota</taxon>
        <taxon>Bacilli</taxon>
        <taxon>Bacillales</taxon>
        <taxon>Bacillaceae</taxon>
        <taxon>Bacillus</taxon>
    </lineage>
</organism>
<evidence type="ECO:0000255" key="1">
    <source>
        <dbReference type="PROSITE-ProRule" id="PRU00303"/>
    </source>
</evidence>
<evidence type="ECO:0000305" key="2"/>
<name>GERAC_BACSU</name>
<comment type="function">
    <text>Forms a complex at the inner spore membrane which acts as a receptor for L-alanine, thus is involved in the stimulation of germination in response to alanine. Can stimulate germination in the absence of GerD and GerK gene products (fructose and glucose receptors, respectively), but the response is improved in their presence.</text>
</comment>
<comment type="subcellular location">
    <subcellularLocation>
        <location evidence="2">Cell membrane</location>
        <topology evidence="2">Lipid-anchor</topology>
    </subcellularLocation>
</comment>
<comment type="developmental stage">
    <text>Expressed in the forespore compartment of the developing sporangium.</text>
</comment>
<comment type="similarity">
    <text evidence="2">Belongs to the GerABKC lipoprotein family.</text>
</comment>
<proteinExistence type="evidence at transcript level"/>
<feature type="signal peptide" evidence="1">
    <location>
        <begin position="1"/>
        <end position="17"/>
    </location>
</feature>
<feature type="chain" id="PRO_0000018173" description="Spore germination protein A3">
    <location>
        <begin position="18"/>
        <end position="373"/>
    </location>
</feature>
<feature type="lipid moiety-binding region" description="N-palmitoyl cysteine" evidence="2">
    <location>
        <position position="18"/>
    </location>
</feature>
<feature type="lipid moiety-binding region" description="S-diacylglycerol cysteine" evidence="2">
    <location>
        <position position="18"/>
    </location>
</feature>
<feature type="sequence conflict" description="In Ref. 1; AAA92782." evidence="2" ref="1">
    <original>L</original>
    <variation>S</variation>
    <location>
        <position position="95"/>
    </location>
</feature>
<keyword id="KW-1003">Cell membrane</keyword>
<keyword id="KW-0309">Germination</keyword>
<keyword id="KW-0449">Lipoprotein</keyword>
<keyword id="KW-0472">Membrane</keyword>
<keyword id="KW-0564">Palmitate</keyword>
<keyword id="KW-1185">Reference proteome</keyword>
<keyword id="KW-0732">Signal</keyword>
<reference key="1">
    <citation type="journal article" date="1987" name="Gene">
        <title>The nucleotide sequence and gene organization of the gerA spore germination operon of Bacillus subtilis 168.</title>
        <authorList>
            <person name="Zuberi A.R."/>
            <person name="Moir A."/>
            <person name="Feavers I.M."/>
        </authorList>
    </citation>
    <scope>NUCLEOTIDE SEQUENCE [GENOMIC DNA]</scope>
    <source>
        <strain>168</strain>
    </source>
</reference>
<reference key="2">
    <citation type="journal article" date="1998" name="Microbiology">
        <title>The yvsA-yvqA (293 degrees - 289 degrees) region of the Bacillus subtilis chromosome containing genes involved in metal ion uptake and a putative sigma factor.</title>
        <authorList>
            <person name="Wipat A."/>
            <person name="Brignell C.S."/>
            <person name="Guy J.B."/>
            <person name="Rose M."/>
            <person name="Emmerson P.T."/>
            <person name="Harwood C.R."/>
        </authorList>
    </citation>
    <scope>NUCLEOTIDE SEQUENCE [GENOMIC DNA]</scope>
    <source>
        <strain>168</strain>
    </source>
</reference>
<reference key="3">
    <citation type="journal article" date="1997" name="Nature">
        <title>The complete genome sequence of the Gram-positive bacterium Bacillus subtilis.</title>
        <authorList>
            <person name="Kunst F."/>
            <person name="Ogasawara N."/>
            <person name="Moszer I."/>
            <person name="Albertini A.M."/>
            <person name="Alloni G."/>
            <person name="Azevedo V."/>
            <person name="Bertero M.G."/>
            <person name="Bessieres P."/>
            <person name="Bolotin A."/>
            <person name="Borchert S."/>
            <person name="Borriss R."/>
            <person name="Boursier L."/>
            <person name="Brans A."/>
            <person name="Braun M."/>
            <person name="Brignell S.C."/>
            <person name="Bron S."/>
            <person name="Brouillet S."/>
            <person name="Bruschi C.V."/>
            <person name="Caldwell B."/>
            <person name="Capuano V."/>
            <person name="Carter N.M."/>
            <person name="Choi S.-K."/>
            <person name="Codani J.-J."/>
            <person name="Connerton I.F."/>
            <person name="Cummings N.J."/>
            <person name="Daniel R.A."/>
            <person name="Denizot F."/>
            <person name="Devine K.M."/>
            <person name="Duesterhoeft A."/>
            <person name="Ehrlich S.D."/>
            <person name="Emmerson P.T."/>
            <person name="Entian K.-D."/>
            <person name="Errington J."/>
            <person name="Fabret C."/>
            <person name="Ferrari E."/>
            <person name="Foulger D."/>
            <person name="Fritz C."/>
            <person name="Fujita M."/>
            <person name="Fujita Y."/>
            <person name="Fuma S."/>
            <person name="Galizzi A."/>
            <person name="Galleron N."/>
            <person name="Ghim S.-Y."/>
            <person name="Glaser P."/>
            <person name="Goffeau A."/>
            <person name="Golightly E.J."/>
            <person name="Grandi G."/>
            <person name="Guiseppi G."/>
            <person name="Guy B.J."/>
            <person name="Haga K."/>
            <person name="Haiech J."/>
            <person name="Harwood C.R."/>
            <person name="Henaut A."/>
            <person name="Hilbert H."/>
            <person name="Holsappel S."/>
            <person name="Hosono S."/>
            <person name="Hullo M.-F."/>
            <person name="Itaya M."/>
            <person name="Jones L.-M."/>
            <person name="Joris B."/>
            <person name="Karamata D."/>
            <person name="Kasahara Y."/>
            <person name="Klaerr-Blanchard M."/>
            <person name="Klein C."/>
            <person name="Kobayashi Y."/>
            <person name="Koetter P."/>
            <person name="Koningstein G."/>
            <person name="Krogh S."/>
            <person name="Kumano M."/>
            <person name="Kurita K."/>
            <person name="Lapidus A."/>
            <person name="Lardinois S."/>
            <person name="Lauber J."/>
            <person name="Lazarevic V."/>
            <person name="Lee S.-M."/>
            <person name="Levine A."/>
            <person name="Liu H."/>
            <person name="Masuda S."/>
            <person name="Mauel C."/>
            <person name="Medigue C."/>
            <person name="Medina N."/>
            <person name="Mellado R.P."/>
            <person name="Mizuno M."/>
            <person name="Moestl D."/>
            <person name="Nakai S."/>
            <person name="Noback M."/>
            <person name="Noone D."/>
            <person name="O'Reilly M."/>
            <person name="Ogawa K."/>
            <person name="Ogiwara A."/>
            <person name="Oudega B."/>
            <person name="Park S.-H."/>
            <person name="Parro V."/>
            <person name="Pohl T.M."/>
            <person name="Portetelle D."/>
            <person name="Porwollik S."/>
            <person name="Prescott A.M."/>
            <person name="Presecan E."/>
            <person name="Pujic P."/>
            <person name="Purnelle B."/>
            <person name="Rapoport G."/>
            <person name="Rey M."/>
            <person name="Reynolds S."/>
            <person name="Rieger M."/>
            <person name="Rivolta C."/>
            <person name="Rocha E."/>
            <person name="Roche B."/>
            <person name="Rose M."/>
            <person name="Sadaie Y."/>
            <person name="Sato T."/>
            <person name="Scanlan E."/>
            <person name="Schleich S."/>
            <person name="Schroeter R."/>
            <person name="Scoffone F."/>
            <person name="Sekiguchi J."/>
            <person name="Sekowska A."/>
            <person name="Seror S.J."/>
            <person name="Serror P."/>
            <person name="Shin B.-S."/>
            <person name="Soldo B."/>
            <person name="Sorokin A."/>
            <person name="Tacconi E."/>
            <person name="Takagi T."/>
            <person name="Takahashi H."/>
            <person name="Takemaru K."/>
            <person name="Takeuchi M."/>
            <person name="Tamakoshi A."/>
            <person name="Tanaka T."/>
            <person name="Terpstra P."/>
            <person name="Tognoni A."/>
            <person name="Tosato V."/>
            <person name="Uchiyama S."/>
            <person name="Vandenbol M."/>
            <person name="Vannier F."/>
            <person name="Vassarotti A."/>
            <person name="Viari A."/>
            <person name="Wambutt R."/>
            <person name="Wedler E."/>
            <person name="Wedler H."/>
            <person name="Weitzenegger T."/>
            <person name="Winters P."/>
            <person name="Wipat A."/>
            <person name="Yamamoto H."/>
            <person name="Yamane K."/>
            <person name="Yasumoto K."/>
            <person name="Yata K."/>
            <person name="Yoshida K."/>
            <person name="Yoshikawa H.-F."/>
            <person name="Zumstein E."/>
            <person name="Yoshikawa H."/>
            <person name="Danchin A."/>
        </authorList>
    </citation>
    <scope>NUCLEOTIDE SEQUENCE [LARGE SCALE GENOMIC DNA]</scope>
    <source>
        <strain>168</strain>
    </source>
</reference>
<protein>
    <recommendedName>
        <fullName>Spore germination protein A3</fullName>
    </recommendedName>
</protein>